<dbReference type="EC" id="6.5.1.2" evidence="1"/>
<dbReference type="EMBL" id="BX842646">
    <property type="protein sequence ID" value="CAE77738.1"/>
    <property type="molecule type" value="Genomic_DNA"/>
</dbReference>
<dbReference type="SMR" id="Q6MRL9"/>
<dbReference type="STRING" id="264462.Bd0057"/>
<dbReference type="KEGG" id="bba:Bd0057"/>
<dbReference type="eggNOG" id="COG0272">
    <property type="taxonomic scope" value="Bacteria"/>
</dbReference>
<dbReference type="HOGENOM" id="CLU_007764_2_1_7"/>
<dbReference type="Proteomes" id="UP000008080">
    <property type="component" value="Chromosome"/>
</dbReference>
<dbReference type="GO" id="GO:0005829">
    <property type="term" value="C:cytosol"/>
    <property type="evidence" value="ECO:0007669"/>
    <property type="project" value="TreeGrafter"/>
</dbReference>
<dbReference type="GO" id="GO:0003677">
    <property type="term" value="F:DNA binding"/>
    <property type="evidence" value="ECO:0007669"/>
    <property type="project" value="InterPro"/>
</dbReference>
<dbReference type="GO" id="GO:0003911">
    <property type="term" value="F:DNA ligase (NAD+) activity"/>
    <property type="evidence" value="ECO:0007669"/>
    <property type="project" value="UniProtKB-UniRule"/>
</dbReference>
<dbReference type="GO" id="GO:0046872">
    <property type="term" value="F:metal ion binding"/>
    <property type="evidence" value="ECO:0007669"/>
    <property type="project" value="UniProtKB-KW"/>
</dbReference>
<dbReference type="GO" id="GO:0006281">
    <property type="term" value="P:DNA repair"/>
    <property type="evidence" value="ECO:0007669"/>
    <property type="project" value="UniProtKB-KW"/>
</dbReference>
<dbReference type="GO" id="GO:0006260">
    <property type="term" value="P:DNA replication"/>
    <property type="evidence" value="ECO:0007669"/>
    <property type="project" value="UniProtKB-KW"/>
</dbReference>
<dbReference type="CDD" id="cd17748">
    <property type="entry name" value="BRCT_DNA_ligase_like"/>
    <property type="match status" value="1"/>
</dbReference>
<dbReference type="CDD" id="cd00114">
    <property type="entry name" value="LIGANc"/>
    <property type="match status" value="1"/>
</dbReference>
<dbReference type="FunFam" id="1.10.150.20:FF:000007">
    <property type="entry name" value="DNA ligase"/>
    <property type="match status" value="1"/>
</dbReference>
<dbReference type="FunFam" id="2.40.50.140:FF:000012">
    <property type="entry name" value="DNA ligase"/>
    <property type="match status" value="1"/>
</dbReference>
<dbReference type="FunFam" id="3.30.470.30:FF:000001">
    <property type="entry name" value="DNA ligase"/>
    <property type="match status" value="1"/>
</dbReference>
<dbReference type="Gene3D" id="6.20.10.30">
    <property type="match status" value="1"/>
</dbReference>
<dbReference type="Gene3D" id="1.10.150.20">
    <property type="entry name" value="5' to 3' exonuclease, C-terminal subdomain"/>
    <property type="match status" value="2"/>
</dbReference>
<dbReference type="Gene3D" id="3.40.50.10190">
    <property type="entry name" value="BRCT domain"/>
    <property type="match status" value="1"/>
</dbReference>
<dbReference type="Gene3D" id="3.30.470.30">
    <property type="entry name" value="DNA ligase/mRNA capping enzyme"/>
    <property type="match status" value="1"/>
</dbReference>
<dbReference type="Gene3D" id="1.10.287.610">
    <property type="entry name" value="Helix hairpin bin"/>
    <property type="match status" value="1"/>
</dbReference>
<dbReference type="Gene3D" id="2.40.50.140">
    <property type="entry name" value="Nucleic acid-binding proteins"/>
    <property type="match status" value="1"/>
</dbReference>
<dbReference type="HAMAP" id="MF_01588">
    <property type="entry name" value="DNA_ligase_A"/>
    <property type="match status" value="1"/>
</dbReference>
<dbReference type="InterPro" id="IPR001357">
    <property type="entry name" value="BRCT_dom"/>
</dbReference>
<dbReference type="InterPro" id="IPR036420">
    <property type="entry name" value="BRCT_dom_sf"/>
</dbReference>
<dbReference type="InterPro" id="IPR041663">
    <property type="entry name" value="DisA/LigA_HHH"/>
</dbReference>
<dbReference type="InterPro" id="IPR001679">
    <property type="entry name" value="DNA_ligase"/>
</dbReference>
<dbReference type="InterPro" id="IPR018239">
    <property type="entry name" value="DNA_ligase_AS"/>
</dbReference>
<dbReference type="InterPro" id="IPR033136">
    <property type="entry name" value="DNA_ligase_CS"/>
</dbReference>
<dbReference type="InterPro" id="IPR013839">
    <property type="entry name" value="DNAligase_adenylation"/>
</dbReference>
<dbReference type="InterPro" id="IPR013840">
    <property type="entry name" value="DNAligase_N"/>
</dbReference>
<dbReference type="InterPro" id="IPR003583">
    <property type="entry name" value="Hlx-hairpin-Hlx_DNA-bd_motif"/>
</dbReference>
<dbReference type="InterPro" id="IPR012340">
    <property type="entry name" value="NA-bd_OB-fold"/>
</dbReference>
<dbReference type="InterPro" id="IPR004150">
    <property type="entry name" value="NAD_DNA_ligase_OB"/>
</dbReference>
<dbReference type="InterPro" id="IPR010994">
    <property type="entry name" value="RuvA_2-like"/>
</dbReference>
<dbReference type="InterPro" id="IPR004149">
    <property type="entry name" value="Znf_DNAligase_C4"/>
</dbReference>
<dbReference type="NCBIfam" id="TIGR00575">
    <property type="entry name" value="dnlj"/>
    <property type="match status" value="1"/>
</dbReference>
<dbReference type="NCBIfam" id="NF005932">
    <property type="entry name" value="PRK07956.1"/>
    <property type="match status" value="1"/>
</dbReference>
<dbReference type="PANTHER" id="PTHR23389">
    <property type="entry name" value="CHROMOSOME TRANSMISSION FIDELITY FACTOR 18"/>
    <property type="match status" value="1"/>
</dbReference>
<dbReference type="PANTHER" id="PTHR23389:SF9">
    <property type="entry name" value="DNA LIGASE"/>
    <property type="match status" value="1"/>
</dbReference>
<dbReference type="Pfam" id="PF00533">
    <property type="entry name" value="BRCT"/>
    <property type="match status" value="1"/>
</dbReference>
<dbReference type="Pfam" id="PF01653">
    <property type="entry name" value="DNA_ligase_aden"/>
    <property type="match status" value="1"/>
</dbReference>
<dbReference type="Pfam" id="PF03120">
    <property type="entry name" value="DNA_ligase_OB"/>
    <property type="match status" value="1"/>
</dbReference>
<dbReference type="Pfam" id="PF03119">
    <property type="entry name" value="DNA_ligase_ZBD"/>
    <property type="match status" value="1"/>
</dbReference>
<dbReference type="Pfam" id="PF12826">
    <property type="entry name" value="HHH_2"/>
    <property type="match status" value="1"/>
</dbReference>
<dbReference type="PIRSF" id="PIRSF001604">
    <property type="entry name" value="LigA"/>
    <property type="match status" value="1"/>
</dbReference>
<dbReference type="SMART" id="SM00292">
    <property type="entry name" value="BRCT"/>
    <property type="match status" value="1"/>
</dbReference>
<dbReference type="SMART" id="SM00278">
    <property type="entry name" value="HhH1"/>
    <property type="match status" value="3"/>
</dbReference>
<dbReference type="SMART" id="SM00532">
    <property type="entry name" value="LIGANc"/>
    <property type="match status" value="1"/>
</dbReference>
<dbReference type="SUPFAM" id="SSF52113">
    <property type="entry name" value="BRCT domain"/>
    <property type="match status" value="1"/>
</dbReference>
<dbReference type="SUPFAM" id="SSF56091">
    <property type="entry name" value="DNA ligase/mRNA capping enzyme, catalytic domain"/>
    <property type="match status" value="1"/>
</dbReference>
<dbReference type="SUPFAM" id="SSF50249">
    <property type="entry name" value="Nucleic acid-binding proteins"/>
    <property type="match status" value="1"/>
</dbReference>
<dbReference type="SUPFAM" id="SSF47781">
    <property type="entry name" value="RuvA domain 2-like"/>
    <property type="match status" value="1"/>
</dbReference>
<dbReference type="PROSITE" id="PS50172">
    <property type="entry name" value="BRCT"/>
    <property type="match status" value="1"/>
</dbReference>
<dbReference type="PROSITE" id="PS01055">
    <property type="entry name" value="DNA_LIGASE_N1"/>
    <property type="match status" value="1"/>
</dbReference>
<dbReference type="PROSITE" id="PS01056">
    <property type="entry name" value="DNA_LIGASE_N2"/>
    <property type="match status" value="1"/>
</dbReference>
<proteinExistence type="inferred from homology"/>
<feature type="chain" id="PRO_0000313138" description="DNA ligase">
    <location>
        <begin position="1"/>
        <end position="684"/>
    </location>
</feature>
<feature type="domain" description="BRCT" evidence="1">
    <location>
        <begin position="609"/>
        <end position="684"/>
    </location>
</feature>
<feature type="active site" description="N6-AMP-lysine intermediate" evidence="1">
    <location>
        <position position="131"/>
    </location>
</feature>
<feature type="binding site" evidence="1">
    <location>
        <begin position="48"/>
        <end position="52"/>
    </location>
    <ligand>
        <name>NAD(+)</name>
        <dbReference type="ChEBI" id="CHEBI:57540"/>
    </ligand>
</feature>
<feature type="binding site" evidence="1">
    <location>
        <begin position="97"/>
        <end position="98"/>
    </location>
    <ligand>
        <name>NAD(+)</name>
        <dbReference type="ChEBI" id="CHEBI:57540"/>
    </ligand>
</feature>
<feature type="binding site" evidence="1">
    <location>
        <position position="129"/>
    </location>
    <ligand>
        <name>NAD(+)</name>
        <dbReference type="ChEBI" id="CHEBI:57540"/>
    </ligand>
</feature>
<feature type="binding site" evidence="1">
    <location>
        <position position="152"/>
    </location>
    <ligand>
        <name>NAD(+)</name>
        <dbReference type="ChEBI" id="CHEBI:57540"/>
    </ligand>
</feature>
<feature type="binding site" evidence="1">
    <location>
        <position position="189"/>
    </location>
    <ligand>
        <name>NAD(+)</name>
        <dbReference type="ChEBI" id="CHEBI:57540"/>
    </ligand>
</feature>
<feature type="binding site" evidence="1">
    <location>
        <position position="310"/>
    </location>
    <ligand>
        <name>NAD(+)</name>
        <dbReference type="ChEBI" id="CHEBI:57540"/>
    </ligand>
</feature>
<feature type="binding site" evidence="1">
    <location>
        <position position="334"/>
    </location>
    <ligand>
        <name>NAD(+)</name>
        <dbReference type="ChEBI" id="CHEBI:57540"/>
    </ligand>
</feature>
<feature type="binding site" evidence="1">
    <location>
        <position position="429"/>
    </location>
    <ligand>
        <name>Zn(2+)</name>
        <dbReference type="ChEBI" id="CHEBI:29105"/>
    </ligand>
</feature>
<feature type="binding site" evidence="1">
    <location>
        <position position="432"/>
    </location>
    <ligand>
        <name>Zn(2+)</name>
        <dbReference type="ChEBI" id="CHEBI:29105"/>
    </ligand>
</feature>
<feature type="binding site" evidence="1">
    <location>
        <position position="447"/>
    </location>
    <ligand>
        <name>Zn(2+)</name>
        <dbReference type="ChEBI" id="CHEBI:29105"/>
    </ligand>
</feature>
<feature type="binding site" evidence="1">
    <location>
        <position position="452"/>
    </location>
    <ligand>
        <name>Zn(2+)</name>
        <dbReference type="ChEBI" id="CHEBI:29105"/>
    </ligand>
</feature>
<comment type="function">
    <text evidence="1">DNA ligase that catalyzes the formation of phosphodiester linkages between 5'-phosphoryl and 3'-hydroxyl groups in double-stranded DNA using NAD as a coenzyme and as the energy source for the reaction. It is essential for DNA replication and repair of damaged DNA.</text>
</comment>
<comment type="catalytic activity">
    <reaction evidence="1">
        <text>NAD(+) + (deoxyribonucleotide)n-3'-hydroxyl + 5'-phospho-(deoxyribonucleotide)m = (deoxyribonucleotide)n+m + AMP + beta-nicotinamide D-nucleotide.</text>
        <dbReference type="EC" id="6.5.1.2"/>
    </reaction>
</comment>
<comment type="cofactor">
    <cofactor evidence="1">
        <name>Mg(2+)</name>
        <dbReference type="ChEBI" id="CHEBI:18420"/>
    </cofactor>
    <cofactor evidence="1">
        <name>Mn(2+)</name>
        <dbReference type="ChEBI" id="CHEBI:29035"/>
    </cofactor>
</comment>
<comment type="similarity">
    <text evidence="1">Belongs to the NAD-dependent DNA ligase family. LigA subfamily.</text>
</comment>
<sequence>MPDAFCRDWTSEMGANYSMSKKRHEELKKIISEHDHNYHVLDKPTITDYEYDQLFAELLDIEKNPKGLDLSDSPSQRVGGTVLEGFTKAQHRLPMLSLANSYSPEDIFEFDERVRKFLNTEDPVEYLCELKFDGLSMELIYENGQLVRAITRGDGTVGEDVTHNIKTIKSIPLKLSHKNPPPLLEVRGEVLMFKEDFARLNETQQENGQQTFANPRNAAAGTVRQLDSRIAASRPLRFFGYALGAVEGETFNTQKNIQEYFNDHGIPTVLPYKEDLLVVAKGPEEVVKYYHHIEKVRPKLPFDIDGVVIKVNSLRLQEDLGLVARSPRWATAAKFKPEQAQTTVEDIVVQVGRTGALTPVAIMKPVKVGGVTVTNATLHNQDEITRKDIRIGDTVIIQRAGDVIPEVVEVVNPDKRPADRLPYSIPERCPACDSVAVKAEGEVVTRCVNPLCIAVVKESLKHFVARRAMNIDKVGDRLIETLVDNKLLTRFSDFYRLTKEQILSLERQGDKSADNIIKSIENSKNPTLARFIFALGIRFVGEQTGKHLADHFLTIDKFLEASEEELLQVPEIGAKVAKSIRDWTGNPKLVDEVKAMIELGVKIAGPVRAQEGSLSGMSFLITGTLPVKRDDAKDLIERNGGKILGSVSSKLNYLVVGDDPGSKVEKAQGLGVKIISWEELQAMI</sequence>
<accession>Q6MRL9</accession>
<gene>
    <name evidence="1" type="primary">ligA</name>
    <name type="ordered locus">Bd0057</name>
</gene>
<keyword id="KW-0227">DNA damage</keyword>
<keyword id="KW-0234">DNA repair</keyword>
<keyword id="KW-0235">DNA replication</keyword>
<keyword id="KW-0436">Ligase</keyword>
<keyword id="KW-0460">Magnesium</keyword>
<keyword id="KW-0464">Manganese</keyword>
<keyword id="KW-0479">Metal-binding</keyword>
<keyword id="KW-0520">NAD</keyword>
<keyword id="KW-1185">Reference proteome</keyword>
<keyword id="KW-0862">Zinc</keyword>
<protein>
    <recommendedName>
        <fullName evidence="1">DNA ligase</fullName>
        <ecNumber evidence="1">6.5.1.2</ecNumber>
    </recommendedName>
    <alternativeName>
        <fullName evidence="1">Polydeoxyribonucleotide synthase [NAD(+)]</fullName>
    </alternativeName>
</protein>
<reference key="1">
    <citation type="journal article" date="2004" name="Science">
        <title>A predator unmasked: life cycle of Bdellovibrio bacteriovorus from a genomic perspective.</title>
        <authorList>
            <person name="Rendulic S."/>
            <person name="Jagtap P."/>
            <person name="Rosinus A."/>
            <person name="Eppinger M."/>
            <person name="Baar C."/>
            <person name="Lanz C."/>
            <person name="Keller H."/>
            <person name="Lambert C."/>
            <person name="Evans K.J."/>
            <person name="Goesmann A."/>
            <person name="Meyer F."/>
            <person name="Sockett R.E."/>
            <person name="Schuster S.C."/>
        </authorList>
    </citation>
    <scope>NUCLEOTIDE SEQUENCE [LARGE SCALE GENOMIC DNA]</scope>
    <source>
        <strain>ATCC 15356 / DSM 50701 / NCIMB 9529 / HD100</strain>
    </source>
</reference>
<organism>
    <name type="scientific">Bdellovibrio bacteriovorus (strain ATCC 15356 / DSM 50701 / NCIMB 9529 / HD100)</name>
    <dbReference type="NCBI Taxonomy" id="264462"/>
    <lineage>
        <taxon>Bacteria</taxon>
        <taxon>Pseudomonadati</taxon>
        <taxon>Bdellovibrionota</taxon>
        <taxon>Bdellovibrionia</taxon>
        <taxon>Bdellovibrionales</taxon>
        <taxon>Pseudobdellovibrionaceae</taxon>
        <taxon>Bdellovibrio</taxon>
    </lineage>
</organism>
<evidence type="ECO:0000255" key="1">
    <source>
        <dbReference type="HAMAP-Rule" id="MF_01588"/>
    </source>
</evidence>
<name>DNLJ_BDEBA</name>